<name>Y585_RICBR</name>
<dbReference type="EMBL" id="CP000087">
    <property type="protein sequence ID" value="ABE04666.1"/>
    <property type="molecule type" value="Genomic_DNA"/>
</dbReference>
<dbReference type="RefSeq" id="WP_011477254.1">
    <property type="nucleotide sequence ID" value="NC_007940.1"/>
</dbReference>
<dbReference type="SMR" id="Q1RIZ8"/>
<dbReference type="KEGG" id="rbe:RBE_0585"/>
<dbReference type="eggNOG" id="COG0666">
    <property type="taxonomic scope" value="Bacteria"/>
</dbReference>
<dbReference type="HOGENOM" id="CLU_1617741_0_0_5"/>
<dbReference type="Proteomes" id="UP000001951">
    <property type="component" value="Chromosome"/>
</dbReference>
<dbReference type="Gene3D" id="1.25.40.20">
    <property type="entry name" value="Ankyrin repeat-containing domain"/>
    <property type="match status" value="1"/>
</dbReference>
<dbReference type="InterPro" id="IPR002110">
    <property type="entry name" value="Ankyrin_rpt"/>
</dbReference>
<dbReference type="InterPro" id="IPR036770">
    <property type="entry name" value="Ankyrin_rpt-contain_sf"/>
</dbReference>
<dbReference type="SMART" id="SM00248">
    <property type="entry name" value="ANK"/>
    <property type="match status" value="2"/>
</dbReference>
<dbReference type="SUPFAM" id="SSF48403">
    <property type="entry name" value="Ankyrin repeat"/>
    <property type="match status" value="1"/>
</dbReference>
<protein>
    <recommendedName>
        <fullName>Putative ankyrin repeat protein RBE_0585</fullName>
    </recommendedName>
</protein>
<accession>Q1RIZ8</accession>
<reference key="1">
    <citation type="journal article" date="2006" name="PLoS Genet.">
        <title>Genome sequence of Rickettsia bellii illuminates the role of amoebae in gene exchanges between intracellular pathogens.</title>
        <authorList>
            <person name="Ogata H."/>
            <person name="La Scola B."/>
            <person name="Audic S."/>
            <person name="Renesto P."/>
            <person name="Blanc G."/>
            <person name="Robert C."/>
            <person name="Fournier P.-E."/>
            <person name="Claverie J.-M."/>
            <person name="Raoult D."/>
        </authorList>
    </citation>
    <scope>NUCLEOTIDE SEQUENCE [LARGE SCALE GENOMIC DNA]</scope>
    <source>
        <strain>RML369-C</strain>
    </source>
</reference>
<keyword id="KW-0040">ANK repeat</keyword>
<keyword id="KW-0677">Repeat</keyword>
<gene>
    <name type="ordered locus">RBE_0585</name>
</gene>
<feature type="chain" id="PRO_0000280913" description="Putative ankyrin repeat protein RBE_0585">
    <location>
        <begin position="1"/>
        <end position="164"/>
    </location>
</feature>
<feature type="repeat" description="ANK 1">
    <location>
        <begin position="42"/>
        <end position="107"/>
    </location>
</feature>
<feature type="repeat" description="ANK 2">
    <location>
        <begin position="126"/>
        <end position="149"/>
    </location>
</feature>
<proteinExistence type="predicted"/>
<organism>
    <name type="scientific">Rickettsia bellii (strain RML369-C)</name>
    <dbReference type="NCBI Taxonomy" id="336407"/>
    <lineage>
        <taxon>Bacteria</taxon>
        <taxon>Pseudomonadati</taxon>
        <taxon>Pseudomonadota</taxon>
        <taxon>Alphaproteobacteria</taxon>
        <taxon>Rickettsiales</taxon>
        <taxon>Rickettsiaceae</taxon>
        <taxon>Rickettsieae</taxon>
        <taxon>Rickettsia</taxon>
        <taxon>belli group</taxon>
    </lineage>
</organism>
<sequence>MTKIPDNIRQDAFKYVMENKPNELFELIAMNPGLINERSQGNQDTLFMRACRYLHKDIIEILLNEQANPTDINNHGNNAIMCLFYREDQHKKPKDINEHDEKAVAILKLFEEKNIPINCFTGQDADKDTPLIEAARAALPQSISFMLDYLEKKSLLRRSIITYK</sequence>